<evidence type="ECO:0000250" key="1">
    <source>
        <dbReference type="UniProtKB" id="Q3MUY2"/>
    </source>
</evidence>
<evidence type="ECO:0000255" key="2"/>
<evidence type="ECO:0000305" key="3"/>
<evidence type="ECO:0000312" key="4">
    <source>
        <dbReference type="MGI" id="MGI:1913518"/>
    </source>
</evidence>
<protein>
    <recommendedName>
        <fullName evidence="3">Phosphatidylinositol N-acetylglucosaminyltransferase subunit Y</fullName>
    </recommendedName>
    <alternativeName>
        <fullName>Phosphatidylinositol-glycan biosynthesis class Y protein</fullName>
        <shortName>PIG-Y</shortName>
    </alternativeName>
</protein>
<dbReference type="EMBL" id="AK021110">
    <property type="status" value="NOT_ANNOTATED_CDS"/>
    <property type="molecule type" value="mRNA"/>
</dbReference>
<dbReference type="EMBL" id="AC159308">
    <property type="status" value="NOT_ANNOTATED_CDS"/>
    <property type="molecule type" value="mRNA"/>
</dbReference>
<dbReference type="CCDS" id="CCDS52742.1"/>
<dbReference type="RefSeq" id="NP_001076001.1">
    <property type="nucleotide sequence ID" value="NM_001082532.1"/>
</dbReference>
<dbReference type="FunCoup" id="P0C1P0">
    <property type="interactions" value="34"/>
</dbReference>
<dbReference type="STRING" id="10090.ENSMUSP00000116929"/>
<dbReference type="iPTMnet" id="P0C1P0"/>
<dbReference type="PhosphoSitePlus" id="P0C1P0"/>
<dbReference type="PaxDb" id="10090-ENSMUSP00000116929"/>
<dbReference type="Antibodypedia" id="58497">
    <property type="antibodies" value="80 antibodies from 21 providers"/>
</dbReference>
<dbReference type="Ensembl" id="ENSMUST00000123680.2">
    <property type="protein sequence ID" value="ENSMUSP00000116929.2"/>
    <property type="gene ID" value="ENSMUSG00000010607.9"/>
</dbReference>
<dbReference type="Ensembl" id="ENSMUST00000148088.2">
    <property type="protein sequence ID" value="ENSMUSP00000116967.2"/>
    <property type="gene ID" value="ENSMUSG00000010607.9"/>
</dbReference>
<dbReference type="GeneID" id="66268"/>
<dbReference type="KEGG" id="mmu:66268"/>
<dbReference type="UCSC" id="uc009ooc.1">
    <property type="organism name" value="mouse"/>
</dbReference>
<dbReference type="AGR" id="MGI:1913518"/>
<dbReference type="CTD" id="66268"/>
<dbReference type="MGI" id="MGI:1913518">
    <property type="gene designation" value="Pigyl"/>
</dbReference>
<dbReference type="VEuPathDB" id="HostDB:ENSMUSG00000010607"/>
<dbReference type="eggNOG" id="ENOG502S4A7">
    <property type="taxonomic scope" value="Eukaryota"/>
</dbReference>
<dbReference type="GeneTree" id="ENSGT00610000087446"/>
<dbReference type="HOGENOM" id="CLU_2978556_0_0_1"/>
<dbReference type="InParanoid" id="P0C1P0"/>
<dbReference type="OMA" id="TNSLCFY"/>
<dbReference type="OrthoDB" id="8902753at2759"/>
<dbReference type="PhylomeDB" id="P0C1P0"/>
<dbReference type="Reactome" id="R-MMU-162710">
    <property type="pathway name" value="Synthesis of glycosylphosphatidylinositol (GPI)"/>
</dbReference>
<dbReference type="UniPathway" id="UPA00196"/>
<dbReference type="BioGRID-ORCS" id="66268">
    <property type="hits" value="7 hits in 79 CRISPR screens"/>
</dbReference>
<dbReference type="PRO" id="PR:P0C1P0"/>
<dbReference type="Proteomes" id="UP000000589">
    <property type="component" value="Chromosome 9"/>
</dbReference>
<dbReference type="RNAct" id="P0C1P0">
    <property type="molecule type" value="protein"/>
</dbReference>
<dbReference type="Bgee" id="ENSMUSG00000010607">
    <property type="expression patterns" value="Expressed in embryonic cell in blastocyst and 233 other cell types or tissues"/>
</dbReference>
<dbReference type="GO" id="GO:0005789">
    <property type="term" value="C:endoplasmic reticulum membrane"/>
    <property type="evidence" value="ECO:0007669"/>
    <property type="project" value="UniProtKB-SubCell"/>
</dbReference>
<dbReference type="GO" id="GO:0006506">
    <property type="term" value="P:GPI anchor biosynthetic process"/>
    <property type="evidence" value="ECO:0007669"/>
    <property type="project" value="UniProtKB-UniPathway"/>
</dbReference>
<dbReference type="InterPro" id="IPR029164">
    <property type="entry name" value="PIG-Y"/>
</dbReference>
<dbReference type="PANTHER" id="PTHR39235">
    <property type="entry name" value="PHOSPHATIDYLINOSITOL N-ACETYLGLUCOSAMINYLTRANSFERASE SUBUNIT Y"/>
    <property type="match status" value="1"/>
</dbReference>
<dbReference type="PANTHER" id="PTHR39235:SF1">
    <property type="entry name" value="PHOSPHATIDYLINOSITOL N-ACETYLGLUCOSAMINYLTRANSFERASE SUBUNIT Y"/>
    <property type="match status" value="1"/>
</dbReference>
<dbReference type="Pfam" id="PF15159">
    <property type="entry name" value="PIG-Y"/>
    <property type="match status" value="1"/>
</dbReference>
<proteinExistence type="inferred from homology"/>
<name>PIGY_MOUSE</name>
<feature type="chain" id="PRO_0000246312" description="Phosphatidylinositol N-acetylglucosaminyltransferase subunit Y">
    <location>
        <begin position="1"/>
        <end position="71"/>
    </location>
</feature>
<feature type="topological domain" description="Cytoplasmic" evidence="2">
    <location>
        <begin position="1"/>
        <end position="5"/>
    </location>
</feature>
<feature type="transmembrane region" description="Helical" evidence="2">
    <location>
        <begin position="6"/>
        <end position="26"/>
    </location>
</feature>
<feature type="topological domain" description="Lumenal" evidence="2">
    <location>
        <begin position="27"/>
        <end position="44"/>
    </location>
</feature>
<feature type="transmembrane region" description="Helical" evidence="2">
    <location>
        <begin position="45"/>
        <end position="65"/>
    </location>
</feature>
<feature type="topological domain" description="Cytoplasmic" evidence="2">
    <location>
        <begin position="66"/>
        <end position="71"/>
    </location>
</feature>
<keyword id="KW-0256">Endoplasmic reticulum</keyword>
<keyword id="KW-0337">GPI-anchor biosynthesis</keyword>
<keyword id="KW-0472">Membrane</keyword>
<keyword id="KW-1185">Reference proteome</keyword>
<keyword id="KW-0812">Transmembrane</keyword>
<keyword id="KW-1133">Transmembrane helix</keyword>
<accession>P0C1P0</accession>
<organism>
    <name type="scientific">Mus musculus</name>
    <name type="common">Mouse</name>
    <dbReference type="NCBI Taxonomy" id="10090"/>
    <lineage>
        <taxon>Eukaryota</taxon>
        <taxon>Metazoa</taxon>
        <taxon>Chordata</taxon>
        <taxon>Craniata</taxon>
        <taxon>Vertebrata</taxon>
        <taxon>Euteleostomi</taxon>
        <taxon>Mammalia</taxon>
        <taxon>Eutheria</taxon>
        <taxon>Euarchontoglires</taxon>
        <taxon>Glires</taxon>
        <taxon>Rodentia</taxon>
        <taxon>Myomorpha</taxon>
        <taxon>Muroidea</taxon>
        <taxon>Muridae</taxon>
        <taxon>Murinae</taxon>
        <taxon>Mus</taxon>
        <taxon>Mus</taxon>
    </lineage>
</organism>
<gene>
    <name evidence="4" type="primary">Pigy</name>
    <name type="synonym">Pigyl</name>
</gene>
<sequence>MIRSLPTMTVLIPLVSLAGLLYSASVEEGFPEGCTSASSLCFYSLLLPVTVPVYVFFHLWTWMGLKLFRHN</sequence>
<comment type="function">
    <text evidence="1">Part of the glycosylphosphatidylinositol-N-acetylglucosaminyltransferase (GPI-GnT) complex that catalyzes the transfer of N-acetylglucosamine from UDP-N-acetylglucosamine to phosphatidylinositol and participates in the first step of GPI biosynthesis. May act by regulating the catalytic subunit PIGA.</text>
</comment>
<comment type="pathway">
    <text evidence="1">Glycolipid biosynthesis; glycosylphosphatidylinositol-anchor biosynthesis.</text>
</comment>
<comment type="subunit">
    <text evidence="1">Component of the glycosylphosphatidylinositol-N-acetylglucosaminyltransferase (GPI-GnT) complex composed at least by PIGA, PIGC, PIGH, PIGP, PIGQ, PIGY and DPM2. Interacts directly with PIGA; this interaction regulates glycosylphosphatidylinositol-N-acetylglucosaminyltransferase activity. Does not interact with Ras proteins.</text>
</comment>
<comment type="subcellular location">
    <subcellularLocation>
        <location evidence="1">Endoplasmic reticulum membrane</location>
        <topology evidence="1">Multi-pass membrane protein</topology>
    </subcellularLocation>
</comment>
<reference key="1">
    <citation type="journal article" date="2005" name="Science">
        <title>The transcriptional landscape of the mammalian genome.</title>
        <authorList>
            <person name="Carninci P."/>
            <person name="Kasukawa T."/>
            <person name="Katayama S."/>
            <person name="Gough J."/>
            <person name="Frith M.C."/>
            <person name="Maeda N."/>
            <person name="Oyama R."/>
            <person name="Ravasi T."/>
            <person name="Lenhard B."/>
            <person name="Wells C."/>
            <person name="Kodzius R."/>
            <person name="Shimokawa K."/>
            <person name="Bajic V.B."/>
            <person name="Brenner S.E."/>
            <person name="Batalov S."/>
            <person name="Forrest A.R."/>
            <person name="Zavolan M."/>
            <person name="Davis M.J."/>
            <person name="Wilming L.G."/>
            <person name="Aidinis V."/>
            <person name="Allen J.E."/>
            <person name="Ambesi-Impiombato A."/>
            <person name="Apweiler R."/>
            <person name="Aturaliya R.N."/>
            <person name="Bailey T.L."/>
            <person name="Bansal M."/>
            <person name="Baxter L."/>
            <person name="Beisel K.W."/>
            <person name="Bersano T."/>
            <person name="Bono H."/>
            <person name="Chalk A.M."/>
            <person name="Chiu K.P."/>
            <person name="Choudhary V."/>
            <person name="Christoffels A."/>
            <person name="Clutterbuck D.R."/>
            <person name="Crowe M.L."/>
            <person name="Dalla E."/>
            <person name="Dalrymple B.P."/>
            <person name="de Bono B."/>
            <person name="Della Gatta G."/>
            <person name="di Bernardo D."/>
            <person name="Down T."/>
            <person name="Engstrom P."/>
            <person name="Fagiolini M."/>
            <person name="Faulkner G."/>
            <person name="Fletcher C.F."/>
            <person name="Fukushima T."/>
            <person name="Furuno M."/>
            <person name="Futaki S."/>
            <person name="Gariboldi M."/>
            <person name="Georgii-Hemming P."/>
            <person name="Gingeras T.R."/>
            <person name="Gojobori T."/>
            <person name="Green R.E."/>
            <person name="Gustincich S."/>
            <person name="Harbers M."/>
            <person name="Hayashi Y."/>
            <person name="Hensch T.K."/>
            <person name="Hirokawa N."/>
            <person name="Hill D."/>
            <person name="Huminiecki L."/>
            <person name="Iacono M."/>
            <person name="Ikeo K."/>
            <person name="Iwama A."/>
            <person name="Ishikawa T."/>
            <person name="Jakt M."/>
            <person name="Kanapin A."/>
            <person name="Katoh M."/>
            <person name="Kawasawa Y."/>
            <person name="Kelso J."/>
            <person name="Kitamura H."/>
            <person name="Kitano H."/>
            <person name="Kollias G."/>
            <person name="Krishnan S.P."/>
            <person name="Kruger A."/>
            <person name="Kummerfeld S.K."/>
            <person name="Kurochkin I.V."/>
            <person name="Lareau L.F."/>
            <person name="Lazarevic D."/>
            <person name="Lipovich L."/>
            <person name="Liu J."/>
            <person name="Liuni S."/>
            <person name="McWilliam S."/>
            <person name="Madan Babu M."/>
            <person name="Madera M."/>
            <person name="Marchionni L."/>
            <person name="Matsuda H."/>
            <person name="Matsuzawa S."/>
            <person name="Miki H."/>
            <person name="Mignone F."/>
            <person name="Miyake S."/>
            <person name="Morris K."/>
            <person name="Mottagui-Tabar S."/>
            <person name="Mulder N."/>
            <person name="Nakano N."/>
            <person name="Nakauchi H."/>
            <person name="Ng P."/>
            <person name="Nilsson R."/>
            <person name="Nishiguchi S."/>
            <person name="Nishikawa S."/>
            <person name="Nori F."/>
            <person name="Ohara O."/>
            <person name="Okazaki Y."/>
            <person name="Orlando V."/>
            <person name="Pang K.C."/>
            <person name="Pavan W.J."/>
            <person name="Pavesi G."/>
            <person name="Pesole G."/>
            <person name="Petrovsky N."/>
            <person name="Piazza S."/>
            <person name="Reed J."/>
            <person name="Reid J.F."/>
            <person name="Ring B.Z."/>
            <person name="Ringwald M."/>
            <person name="Rost B."/>
            <person name="Ruan Y."/>
            <person name="Salzberg S.L."/>
            <person name="Sandelin A."/>
            <person name="Schneider C."/>
            <person name="Schoenbach C."/>
            <person name="Sekiguchi K."/>
            <person name="Semple C.A."/>
            <person name="Seno S."/>
            <person name="Sessa L."/>
            <person name="Sheng Y."/>
            <person name="Shibata Y."/>
            <person name="Shimada H."/>
            <person name="Shimada K."/>
            <person name="Silva D."/>
            <person name="Sinclair B."/>
            <person name="Sperling S."/>
            <person name="Stupka E."/>
            <person name="Sugiura K."/>
            <person name="Sultana R."/>
            <person name="Takenaka Y."/>
            <person name="Taki K."/>
            <person name="Tammoja K."/>
            <person name="Tan S.L."/>
            <person name="Tang S."/>
            <person name="Taylor M.S."/>
            <person name="Tegner J."/>
            <person name="Teichmann S.A."/>
            <person name="Ueda H.R."/>
            <person name="van Nimwegen E."/>
            <person name="Verardo R."/>
            <person name="Wei C.L."/>
            <person name="Yagi K."/>
            <person name="Yamanishi H."/>
            <person name="Zabarovsky E."/>
            <person name="Zhu S."/>
            <person name="Zimmer A."/>
            <person name="Hide W."/>
            <person name="Bult C."/>
            <person name="Grimmond S.M."/>
            <person name="Teasdale R.D."/>
            <person name="Liu E.T."/>
            <person name="Brusic V."/>
            <person name="Quackenbush J."/>
            <person name="Wahlestedt C."/>
            <person name="Mattick J.S."/>
            <person name="Hume D.A."/>
            <person name="Kai C."/>
            <person name="Sasaki D."/>
            <person name="Tomaru Y."/>
            <person name="Fukuda S."/>
            <person name="Kanamori-Katayama M."/>
            <person name="Suzuki M."/>
            <person name="Aoki J."/>
            <person name="Arakawa T."/>
            <person name="Iida J."/>
            <person name="Imamura K."/>
            <person name="Itoh M."/>
            <person name="Kato T."/>
            <person name="Kawaji H."/>
            <person name="Kawagashira N."/>
            <person name="Kawashima T."/>
            <person name="Kojima M."/>
            <person name="Kondo S."/>
            <person name="Konno H."/>
            <person name="Nakano K."/>
            <person name="Ninomiya N."/>
            <person name="Nishio T."/>
            <person name="Okada M."/>
            <person name="Plessy C."/>
            <person name="Shibata K."/>
            <person name="Shiraki T."/>
            <person name="Suzuki S."/>
            <person name="Tagami M."/>
            <person name="Waki K."/>
            <person name="Watahiki A."/>
            <person name="Okamura-Oho Y."/>
            <person name="Suzuki H."/>
            <person name="Kawai J."/>
            <person name="Hayashizaki Y."/>
        </authorList>
    </citation>
    <scope>NUCLEOTIDE SEQUENCE [LARGE SCALE MRNA]</scope>
    <source>
        <tissue>Corpus striatum</tissue>
    </source>
</reference>
<reference key="2">
    <citation type="journal article" date="2009" name="PLoS Biol.">
        <title>Lineage-specific biology revealed by a finished genome assembly of the mouse.</title>
        <authorList>
            <person name="Church D.M."/>
            <person name="Goodstadt L."/>
            <person name="Hillier L.W."/>
            <person name="Zody M.C."/>
            <person name="Goldstein S."/>
            <person name="She X."/>
            <person name="Bult C.J."/>
            <person name="Agarwala R."/>
            <person name="Cherry J.L."/>
            <person name="DiCuccio M."/>
            <person name="Hlavina W."/>
            <person name="Kapustin Y."/>
            <person name="Meric P."/>
            <person name="Maglott D."/>
            <person name="Birtle Z."/>
            <person name="Marques A.C."/>
            <person name="Graves T."/>
            <person name="Zhou S."/>
            <person name="Teague B."/>
            <person name="Potamousis K."/>
            <person name="Churas C."/>
            <person name="Place M."/>
            <person name="Herschleb J."/>
            <person name="Runnheim R."/>
            <person name="Forrest D."/>
            <person name="Amos-Landgraf J."/>
            <person name="Schwartz D.C."/>
            <person name="Cheng Z."/>
            <person name="Lindblad-Toh K."/>
            <person name="Eichler E.E."/>
            <person name="Ponting C.P."/>
        </authorList>
    </citation>
    <scope>NUCLEOTIDE SEQUENCE [LARGE SCALE GENOMIC DNA]</scope>
    <source>
        <strain>C57BL/6J</strain>
    </source>
</reference>